<feature type="chain" id="PRO_0000184187" description="Regulatory protein SdiA">
    <location>
        <begin position="1"/>
        <end position="240"/>
    </location>
</feature>
<feature type="domain" description="HTH luxR-type" evidence="1">
    <location>
        <begin position="173"/>
        <end position="238"/>
    </location>
</feature>
<feature type="DNA-binding region" description="H-T-H motif" evidence="1">
    <location>
        <begin position="197"/>
        <end position="216"/>
    </location>
</feature>
<feature type="sequence conflict" description="In Ref. 1; CAA27327." evidence="4" ref="1">
    <original>TQYLMLPNR</original>
    <variation>HSVFNAAQTG</variation>
    <location>
        <begin position="120"/>
        <end position="128"/>
    </location>
</feature>
<feature type="sequence conflict" description="In Ref. 1; CAA27327." evidence="4" ref="1">
    <original>A</original>
    <variation>R</variation>
    <location>
        <position position="140"/>
    </location>
</feature>
<feature type="helix" evidence="5">
    <location>
        <begin position="6"/>
        <end position="19"/>
    </location>
</feature>
<feature type="helix" evidence="5">
    <location>
        <begin position="23"/>
        <end position="36"/>
    </location>
</feature>
<feature type="strand" evidence="5">
    <location>
        <begin position="40"/>
        <end position="47"/>
    </location>
</feature>
<feature type="strand" evidence="5">
    <location>
        <begin position="51"/>
        <end position="54"/>
    </location>
</feature>
<feature type="strand" evidence="5">
    <location>
        <begin position="57"/>
        <end position="61"/>
    </location>
</feature>
<feature type="helix" evidence="5">
    <location>
        <begin position="65"/>
        <end position="73"/>
    </location>
</feature>
<feature type="helix" evidence="5">
    <location>
        <begin position="76"/>
        <end position="78"/>
    </location>
</feature>
<feature type="helix" evidence="5">
    <location>
        <begin position="81"/>
        <end position="83"/>
    </location>
</feature>
<feature type="helix" evidence="5">
    <location>
        <begin position="85"/>
        <end position="87"/>
    </location>
</feature>
<feature type="strand" evidence="5">
    <location>
        <begin position="92"/>
        <end position="94"/>
    </location>
</feature>
<feature type="helix" evidence="5">
    <location>
        <begin position="97"/>
        <end position="100"/>
    </location>
</feature>
<feature type="helix" evidence="5">
    <location>
        <begin position="104"/>
        <end position="112"/>
    </location>
</feature>
<feature type="strand" evidence="5">
    <location>
        <begin position="117"/>
        <end position="124"/>
    </location>
</feature>
<feature type="strand" evidence="5">
    <location>
        <begin position="130"/>
        <end position="138"/>
    </location>
</feature>
<feature type="helix" evidence="5">
    <location>
        <begin position="147"/>
        <end position="167"/>
    </location>
</feature>
<feature type="turn" evidence="5">
    <location>
        <begin position="171"/>
        <end position="173"/>
    </location>
</feature>
<feature type="helix" evidence="5">
    <location>
        <begin position="182"/>
        <end position="192"/>
    </location>
</feature>
<feature type="helix" evidence="5">
    <location>
        <begin position="197"/>
        <end position="204"/>
    </location>
</feature>
<feature type="helix" evidence="5">
    <location>
        <begin position="208"/>
        <end position="222"/>
    </location>
</feature>
<feature type="helix" evidence="5">
    <location>
        <begin position="227"/>
        <end position="236"/>
    </location>
</feature>
<comment type="function">
    <text evidence="2 3">Activates cell division by specifically increasing transcription from one of the two promoters that lie immediately upstream of the ftsQAZ gene cluster. Activates ydiV expression in response to extracellular autoinducer AI-1 (Vibrio fischeri autoinducer oxoC6).</text>
</comment>
<comment type="induction">
    <text evidence="2">Repressed by glucose.</text>
</comment>
<comment type="domain">
    <text>Binding to the autoinducer occurs via the N-terminal 170 residues; as E.coli does not produce LuxI autoinducers endogenously it should be able to bind to a number of different AI-1 autoinducers, which would enable it to detect other bacteria. This was shown to be the case.</text>
</comment>
<comment type="disruption phenotype">
    <text evidence="2">A double sdiA/ydiV deletion mutant leads to decreased cAMP levels which inhibits quorum sensing system 2.</text>
</comment>
<gene>
    <name type="primary">sdiA</name>
    <name type="ordered locus">b1916</name>
    <name type="ordered locus">JW1901</name>
</gene>
<proteinExistence type="evidence at protein level"/>
<sequence length="240" mass="28117">MQDKDFFSWRRTMLLRFQRMETAEEVYHEIELQAQQLEYDYYSLCVRHPVPFTRPKVAFYTNYPEAWVSYYQAKNFLAIDPVLNPENFSQGHLMWNDDLFSEAQPLWEAARAHGLRRGVTQYLMLPNRALGFLSFSRCSAREIPILSDELQLKMQLLVRESLMALMRLNDEIVMTPEMNFSKREKEILRWTAEGKTSAEIAMILSISENTVNFHQKNMQKKINAPNKTQVACYAAATGLI</sequence>
<reference key="1">
    <citation type="journal article" date="1986" name="Nucleic Acids Res.">
        <title>Multiple control elements for the uvrC gene unit of Escherichia coli.</title>
        <authorList>
            <person name="Sharma S."/>
            <person name="Stark T.F."/>
            <person name="Beattie W.G."/>
            <person name="Moses R.E."/>
        </authorList>
    </citation>
    <scope>NUCLEOTIDE SEQUENCE [GENOMIC DNA]</scope>
</reference>
<reference key="2">
    <citation type="journal article" date="1996" name="DNA Res.">
        <title>A 460-kb DNA sequence of the Escherichia coli K-12 genome corresponding to the 40.1-50.0 min region on the linkage map.</title>
        <authorList>
            <person name="Itoh T."/>
            <person name="Aiba H."/>
            <person name="Baba T."/>
            <person name="Fujita K."/>
            <person name="Hayashi K."/>
            <person name="Inada T."/>
            <person name="Isono K."/>
            <person name="Kasai H."/>
            <person name="Kimura S."/>
            <person name="Kitakawa M."/>
            <person name="Kitagawa M."/>
            <person name="Makino K."/>
            <person name="Miki T."/>
            <person name="Mizobuchi K."/>
            <person name="Mori H."/>
            <person name="Mori T."/>
            <person name="Motomura K."/>
            <person name="Nakade S."/>
            <person name="Nakamura Y."/>
            <person name="Nashimoto H."/>
            <person name="Nishio Y."/>
            <person name="Oshima T."/>
            <person name="Saito N."/>
            <person name="Sampei G."/>
            <person name="Seki Y."/>
            <person name="Sivasundaram S."/>
            <person name="Tagami H."/>
            <person name="Takeda J."/>
            <person name="Takemoto K."/>
            <person name="Wada C."/>
            <person name="Yamamoto Y."/>
            <person name="Horiuchi T."/>
        </authorList>
    </citation>
    <scope>NUCLEOTIDE SEQUENCE [LARGE SCALE GENOMIC DNA]</scope>
    <source>
        <strain>K12 / W3110 / ATCC 27325 / DSM 5911</strain>
    </source>
</reference>
<reference key="3">
    <citation type="journal article" date="1997" name="Science">
        <title>The complete genome sequence of Escherichia coli K-12.</title>
        <authorList>
            <person name="Blattner F.R."/>
            <person name="Plunkett G. III"/>
            <person name="Bloch C.A."/>
            <person name="Perna N.T."/>
            <person name="Burland V."/>
            <person name="Riley M."/>
            <person name="Collado-Vides J."/>
            <person name="Glasner J.D."/>
            <person name="Rode C.K."/>
            <person name="Mayhew G.F."/>
            <person name="Gregor J."/>
            <person name="Davis N.W."/>
            <person name="Kirkpatrick H.A."/>
            <person name="Goeden M.A."/>
            <person name="Rose D.J."/>
            <person name="Mau B."/>
            <person name="Shao Y."/>
        </authorList>
    </citation>
    <scope>NUCLEOTIDE SEQUENCE [LARGE SCALE GENOMIC DNA]</scope>
    <source>
        <strain>K12 / MG1655 / ATCC 47076</strain>
    </source>
</reference>
<reference key="4">
    <citation type="journal article" date="2006" name="Mol. Syst. Biol.">
        <title>Highly accurate genome sequences of Escherichia coli K-12 strains MG1655 and W3110.</title>
        <authorList>
            <person name="Hayashi K."/>
            <person name="Morooka N."/>
            <person name="Yamamoto Y."/>
            <person name="Fujita K."/>
            <person name="Isono K."/>
            <person name="Choi S."/>
            <person name="Ohtsubo E."/>
            <person name="Baba T."/>
            <person name="Wanner B.L."/>
            <person name="Mori H."/>
            <person name="Horiuchi T."/>
        </authorList>
    </citation>
    <scope>NUCLEOTIDE SEQUENCE [LARGE SCALE GENOMIC DNA]</scope>
    <source>
        <strain>K12 / W3110 / ATCC 27325 / DSM 5911</strain>
    </source>
</reference>
<reference key="5">
    <citation type="journal article" date="1991" name="EMBO J.">
        <title>A factor that positively regulates cell division by activating transcription of the major cluster of essential cell division genes of Escherichia coli.</title>
        <authorList>
            <person name="Wang X."/>
            <person name="de Boer P.A.J."/>
            <person name="Rothfield L.I."/>
        </authorList>
    </citation>
    <scope>FUNCTION</scope>
</reference>
<reference key="6">
    <citation type="journal article" date="2008" name="Cell Res.">
        <title>An EAL domain protein and cyclic AMP contribute to the interaction between the two quorum sensing systems in Escherichia coli.</title>
        <authorList>
            <person name="Zhou X."/>
            <person name="Meng X."/>
            <person name="Sun B."/>
        </authorList>
    </citation>
    <scope>ROLE IN YDIV REGULATION</scope>
    <scope>REPRESSION BY GLUCOSE</scope>
    <scope>DISRUPTION PHENOTYPE</scope>
    <source>
        <strain>K12 / W3110 / ZK126</strain>
    </source>
</reference>
<reference key="7">
    <citation type="journal article" date="2006" name="J. Mol. Biol.">
        <title>Structure of the Escherichia coli quorum sensing protein SdiA: activation of the folding switch by acyl homoserine lactones.</title>
        <authorList>
            <person name="Yao Y."/>
            <person name="Martinez-Yamout M.A."/>
            <person name="Dickerson T.J."/>
            <person name="Brogan A.P."/>
            <person name="Wright P.E."/>
            <person name="Dyson H.J."/>
        </authorList>
    </citation>
    <scope>STRUCTURE BY NMR OF 3-171 IN COMPLEX WITH AUTOINDUCER</scope>
    <scope>BINDING OF HOMOSERINE LACTONE DERIVATIVES</scope>
</reference>
<name>SDIA_ECOLI</name>
<dbReference type="EMBL" id="X03691">
    <property type="protein sequence ID" value="CAA27327.1"/>
    <property type="molecule type" value="Genomic_DNA"/>
</dbReference>
<dbReference type="EMBL" id="U00096">
    <property type="protein sequence ID" value="AAC74983.1"/>
    <property type="molecule type" value="Genomic_DNA"/>
</dbReference>
<dbReference type="EMBL" id="AP009048">
    <property type="protein sequence ID" value="BAA15736.1"/>
    <property type="molecule type" value="Genomic_DNA"/>
</dbReference>
<dbReference type="PIR" id="A64955">
    <property type="entry name" value="QQECU1"/>
</dbReference>
<dbReference type="RefSeq" id="NP_416426.1">
    <property type="nucleotide sequence ID" value="NC_000913.3"/>
</dbReference>
<dbReference type="RefSeq" id="WP_001152715.1">
    <property type="nucleotide sequence ID" value="NZ_LN832404.1"/>
</dbReference>
<dbReference type="PDB" id="2AVX">
    <property type="method" value="NMR"/>
    <property type="chains" value="A=1-171"/>
</dbReference>
<dbReference type="PDB" id="4LFU">
    <property type="method" value="X-ray"/>
    <property type="resolution" value="2.26 A"/>
    <property type="chains" value="A=1-240"/>
</dbReference>
<dbReference type="PDB" id="4LGW">
    <property type="method" value="X-ray"/>
    <property type="resolution" value="2.70 A"/>
    <property type="chains" value="A=1-240"/>
</dbReference>
<dbReference type="PDBsum" id="2AVX"/>
<dbReference type="PDBsum" id="4LFU"/>
<dbReference type="PDBsum" id="4LGW"/>
<dbReference type="BMRB" id="P07026"/>
<dbReference type="SMR" id="P07026"/>
<dbReference type="BioGRID" id="4259602">
    <property type="interactions" value="212"/>
</dbReference>
<dbReference type="BioGRID" id="850778">
    <property type="interactions" value="3"/>
</dbReference>
<dbReference type="FunCoup" id="P07026">
    <property type="interactions" value="397"/>
</dbReference>
<dbReference type="IntAct" id="P07026">
    <property type="interactions" value="8"/>
</dbReference>
<dbReference type="STRING" id="511145.b1916"/>
<dbReference type="ChEMBL" id="CHEMBL4523168"/>
<dbReference type="DrugBank" id="DB07928">
    <property type="generic name" value="N-(2-OXOTETRAHYDROFURAN-3-YL)OCTANAMIDE"/>
</dbReference>
<dbReference type="PaxDb" id="511145-b1916"/>
<dbReference type="EnsemblBacteria" id="AAC74983">
    <property type="protein sequence ID" value="AAC74983"/>
    <property type="gene ID" value="b1916"/>
</dbReference>
<dbReference type="GeneID" id="946421"/>
<dbReference type="KEGG" id="ecj:JW1901"/>
<dbReference type="KEGG" id="eco:b1916"/>
<dbReference type="KEGG" id="ecoc:C3026_10875"/>
<dbReference type="PATRIC" id="fig|1411691.4.peg.333"/>
<dbReference type="EchoBASE" id="EB0928"/>
<dbReference type="eggNOG" id="COG2197">
    <property type="taxonomic scope" value="Bacteria"/>
</dbReference>
<dbReference type="HOGENOM" id="CLU_072786_7_1_6"/>
<dbReference type="InParanoid" id="P07026"/>
<dbReference type="OMA" id="CEILQWA"/>
<dbReference type="OrthoDB" id="9774661at2"/>
<dbReference type="PhylomeDB" id="P07026"/>
<dbReference type="BioCyc" id="EcoCyc:PD02198"/>
<dbReference type="EvolutionaryTrace" id="P07026"/>
<dbReference type="PRO" id="PR:P07026"/>
<dbReference type="Proteomes" id="UP000000625">
    <property type="component" value="Chromosome"/>
</dbReference>
<dbReference type="GO" id="GO:0003677">
    <property type="term" value="F:DNA binding"/>
    <property type="evidence" value="ECO:0007669"/>
    <property type="project" value="UniProtKB-KW"/>
</dbReference>
<dbReference type="GO" id="GO:0051301">
    <property type="term" value="P:cell division"/>
    <property type="evidence" value="ECO:0007669"/>
    <property type="project" value="UniProtKB-KW"/>
</dbReference>
<dbReference type="GO" id="GO:2000144">
    <property type="term" value="P:positive regulation of DNA-templated transcription initiation"/>
    <property type="evidence" value="ECO:0000314"/>
    <property type="project" value="EcoCyc"/>
</dbReference>
<dbReference type="CDD" id="cd06170">
    <property type="entry name" value="LuxR_C_like"/>
    <property type="match status" value="1"/>
</dbReference>
<dbReference type="FunFam" id="1.10.10.10:FF:000297">
    <property type="entry name" value="DNA-binding transcriptional activator SdiA"/>
    <property type="match status" value="1"/>
</dbReference>
<dbReference type="FunFam" id="3.30.450.80:FF:000002">
    <property type="entry name" value="DNA-binding transcriptional activator SdiA"/>
    <property type="match status" value="1"/>
</dbReference>
<dbReference type="Gene3D" id="3.30.450.80">
    <property type="entry name" value="Transcription factor LuxR-like, autoinducer-binding domain"/>
    <property type="match status" value="1"/>
</dbReference>
<dbReference type="Gene3D" id="1.10.10.10">
    <property type="entry name" value="Winged helix-like DNA-binding domain superfamily/Winged helix DNA-binding domain"/>
    <property type="match status" value="1"/>
</dbReference>
<dbReference type="InterPro" id="IPR016032">
    <property type="entry name" value="Sig_transdc_resp-reg_C-effctor"/>
</dbReference>
<dbReference type="InterPro" id="IPR005143">
    <property type="entry name" value="TF_LuxR_autoind-bd_dom"/>
</dbReference>
<dbReference type="InterPro" id="IPR036693">
    <property type="entry name" value="TF_LuxR_autoind-bd_dom_sf"/>
</dbReference>
<dbReference type="InterPro" id="IPR000792">
    <property type="entry name" value="Tscrpt_reg_LuxR_C"/>
</dbReference>
<dbReference type="InterPro" id="IPR036388">
    <property type="entry name" value="WH-like_DNA-bd_sf"/>
</dbReference>
<dbReference type="NCBIfam" id="NF007561">
    <property type="entry name" value="PRK10188.1"/>
    <property type="match status" value="1"/>
</dbReference>
<dbReference type="PANTHER" id="PTHR44688">
    <property type="entry name" value="DNA-BINDING TRANSCRIPTIONAL ACTIVATOR DEVR_DOSR"/>
    <property type="match status" value="1"/>
</dbReference>
<dbReference type="PANTHER" id="PTHR44688:SF16">
    <property type="entry name" value="DNA-BINDING TRANSCRIPTIONAL ACTIVATOR DEVR_DOSR"/>
    <property type="match status" value="1"/>
</dbReference>
<dbReference type="Pfam" id="PF03472">
    <property type="entry name" value="Autoind_bind"/>
    <property type="match status" value="1"/>
</dbReference>
<dbReference type="Pfam" id="PF00196">
    <property type="entry name" value="GerE"/>
    <property type="match status" value="1"/>
</dbReference>
<dbReference type="PRINTS" id="PR00038">
    <property type="entry name" value="HTHLUXR"/>
</dbReference>
<dbReference type="SMART" id="SM00421">
    <property type="entry name" value="HTH_LUXR"/>
    <property type="match status" value="1"/>
</dbReference>
<dbReference type="SUPFAM" id="SSF46894">
    <property type="entry name" value="C-terminal effector domain of the bipartite response regulators"/>
    <property type="match status" value="1"/>
</dbReference>
<dbReference type="SUPFAM" id="SSF75516">
    <property type="entry name" value="Pheromone-binding domain of LuxR-like quorum-sensing transcription factors"/>
    <property type="match status" value="1"/>
</dbReference>
<dbReference type="PROSITE" id="PS00622">
    <property type="entry name" value="HTH_LUXR_1"/>
    <property type="match status" value="1"/>
</dbReference>
<dbReference type="PROSITE" id="PS50043">
    <property type="entry name" value="HTH_LUXR_2"/>
    <property type="match status" value="1"/>
</dbReference>
<evidence type="ECO:0000255" key="1">
    <source>
        <dbReference type="PROSITE-ProRule" id="PRU00411"/>
    </source>
</evidence>
<evidence type="ECO:0000269" key="2">
    <source>
    </source>
</evidence>
<evidence type="ECO:0000269" key="3">
    <source>
    </source>
</evidence>
<evidence type="ECO:0000305" key="4"/>
<evidence type="ECO:0007829" key="5">
    <source>
        <dbReference type="PDB" id="4LFU"/>
    </source>
</evidence>
<organism>
    <name type="scientific">Escherichia coli (strain K12)</name>
    <dbReference type="NCBI Taxonomy" id="83333"/>
    <lineage>
        <taxon>Bacteria</taxon>
        <taxon>Pseudomonadati</taxon>
        <taxon>Pseudomonadota</taxon>
        <taxon>Gammaproteobacteria</taxon>
        <taxon>Enterobacterales</taxon>
        <taxon>Enterobacteriaceae</taxon>
        <taxon>Escherichia</taxon>
    </lineage>
</organism>
<keyword id="KW-0002">3D-structure</keyword>
<keyword id="KW-0010">Activator</keyword>
<keyword id="KW-0131">Cell cycle</keyword>
<keyword id="KW-0132">Cell division</keyword>
<keyword id="KW-0238">DNA-binding</keyword>
<keyword id="KW-1185">Reference proteome</keyword>
<keyword id="KW-0804">Transcription</keyword>
<keyword id="KW-0805">Transcription regulation</keyword>
<accession>P07026</accession>
<accession>P76313</accession>
<protein>
    <recommendedName>
        <fullName>Regulatory protein SdiA</fullName>
    </recommendedName>
</protein>